<feature type="chain" id="PRO_0000257219" description="UDP-N-acetylmuramoylalanine--D-glutamate ligase">
    <location>
        <begin position="1"/>
        <end position="476"/>
    </location>
</feature>
<feature type="binding site" evidence="1">
    <location>
        <begin position="122"/>
        <end position="128"/>
    </location>
    <ligand>
        <name>ATP</name>
        <dbReference type="ChEBI" id="CHEBI:30616"/>
    </ligand>
</feature>
<name>MURD_PSYA2</name>
<accession>Q4FQ21</accession>
<sequence length="476" mass="50234">MTASTATETLLHKGSGLQVVVGLGQSGLSVAHYLAEQGYQVAVTDNQENPALADKLPATIDIRQFGAIDAELLQQAARIIISPGISLDNDAIAAARAANIPVVSDIQLFCEACTVPIVAITGSNAKSTVTTLVGQMAADAGINVGVGGNIGVPALSLLSNDKMELAVIELSSFQLETVTNLGAQVATVLNMSPDHLDRHGDMLGYHQAKHRIFQGAKSVVINREDALTRPLVSDSLPRLSTGIHAPNKGHYGLITDAAGQTYLARGTERLISADKLKIKGRHNLLNAQAALALGELAGLPLESMLSTLQQFAGLEHRCQYVATIAGIDYFNDSKGTNIGSTMAAVEGLGAVYAPKDGKLLLILGGQGKAQQFGELSPFINQYVSQVLFIGEDSQQIEQHLRAAGLSDEVSLHQCQTLENAFSMIEQVTASSLSQVQAVLLSPACASFDQFNGFVARGERFSQLVKQLNTVSQQALS</sequence>
<proteinExistence type="inferred from homology"/>
<dbReference type="EC" id="6.3.2.9" evidence="1"/>
<dbReference type="EMBL" id="CP000082">
    <property type="protein sequence ID" value="AAZ19887.1"/>
    <property type="molecule type" value="Genomic_DNA"/>
</dbReference>
<dbReference type="RefSeq" id="WP_011281294.1">
    <property type="nucleotide sequence ID" value="NC_007204.1"/>
</dbReference>
<dbReference type="SMR" id="Q4FQ21"/>
<dbReference type="STRING" id="259536.Psyc_2040"/>
<dbReference type="KEGG" id="par:Psyc_2040"/>
<dbReference type="eggNOG" id="COG0771">
    <property type="taxonomic scope" value="Bacteria"/>
</dbReference>
<dbReference type="HOGENOM" id="CLU_032540_1_0_6"/>
<dbReference type="OrthoDB" id="9809796at2"/>
<dbReference type="UniPathway" id="UPA00219"/>
<dbReference type="Proteomes" id="UP000000546">
    <property type="component" value="Chromosome"/>
</dbReference>
<dbReference type="GO" id="GO:0005737">
    <property type="term" value="C:cytoplasm"/>
    <property type="evidence" value="ECO:0007669"/>
    <property type="project" value="UniProtKB-SubCell"/>
</dbReference>
<dbReference type="GO" id="GO:0005524">
    <property type="term" value="F:ATP binding"/>
    <property type="evidence" value="ECO:0007669"/>
    <property type="project" value="UniProtKB-UniRule"/>
</dbReference>
<dbReference type="GO" id="GO:0008764">
    <property type="term" value="F:UDP-N-acetylmuramoylalanine-D-glutamate ligase activity"/>
    <property type="evidence" value="ECO:0007669"/>
    <property type="project" value="UniProtKB-UniRule"/>
</dbReference>
<dbReference type="GO" id="GO:0051301">
    <property type="term" value="P:cell division"/>
    <property type="evidence" value="ECO:0007669"/>
    <property type="project" value="UniProtKB-KW"/>
</dbReference>
<dbReference type="GO" id="GO:0071555">
    <property type="term" value="P:cell wall organization"/>
    <property type="evidence" value="ECO:0007669"/>
    <property type="project" value="UniProtKB-KW"/>
</dbReference>
<dbReference type="GO" id="GO:0009252">
    <property type="term" value="P:peptidoglycan biosynthetic process"/>
    <property type="evidence" value="ECO:0007669"/>
    <property type="project" value="UniProtKB-UniRule"/>
</dbReference>
<dbReference type="GO" id="GO:0008360">
    <property type="term" value="P:regulation of cell shape"/>
    <property type="evidence" value="ECO:0007669"/>
    <property type="project" value="UniProtKB-KW"/>
</dbReference>
<dbReference type="Gene3D" id="3.90.190.20">
    <property type="entry name" value="Mur ligase, C-terminal domain"/>
    <property type="match status" value="1"/>
</dbReference>
<dbReference type="Gene3D" id="3.40.1190.10">
    <property type="entry name" value="Mur-like, catalytic domain"/>
    <property type="match status" value="1"/>
</dbReference>
<dbReference type="Gene3D" id="3.40.50.720">
    <property type="entry name" value="NAD(P)-binding Rossmann-like Domain"/>
    <property type="match status" value="1"/>
</dbReference>
<dbReference type="HAMAP" id="MF_00639">
    <property type="entry name" value="MurD"/>
    <property type="match status" value="1"/>
</dbReference>
<dbReference type="InterPro" id="IPR036565">
    <property type="entry name" value="Mur-like_cat_sf"/>
</dbReference>
<dbReference type="InterPro" id="IPR004101">
    <property type="entry name" value="Mur_ligase_C"/>
</dbReference>
<dbReference type="InterPro" id="IPR036615">
    <property type="entry name" value="Mur_ligase_C_dom_sf"/>
</dbReference>
<dbReference type="InterPro" id="IPR013221">
    <property type="entry name" value="Mur_ligase_cen"/>
</dbReference>
<dbReference type="InterPro" id="IPR005762">
    <property type="entry name" value="MurD"/>
</dbReference>
<dbReference type="NCBIfam" id="TIGR01087">
    <property type="entry name" value="murD"/>
    <property type="match status" value="1"/>
</dbReference>
<dbReference type="PANTHER" id="PTHR43692">
    <property type="entry name" value="UDP-N-ACETYLMURAMOYLALANINE--D-GLUTAMATE LIGASE"/>
    <property type="match status" value="1"/>
</dbReference>
<dbReference type="PANTHER" id="PTHR43692:SF1">
    <property type="entry name" value="UDP-N-ACETYLMURAMOYLALANINE--D-GLUTAMATE LIGASE"/>
    <property type="match status" value="1"/>
</dbReference>
<dbReference type="Pfam" id="PF02875">
    <property type="entry name" value="Mur_ligase_C"/>
    <property type="match status" value="1"/>
</dbReference>
<dbReference type="Pfam" id="PF08245">
    <property type="entry name" value="Mur_ligase_M"/>
    <property type="match status" value="1"/>
</dbReference>
<dbReference type="Pfam" id="PF21799">
    <property type="entry name" value="MurD-like_N"/>
    <property type="match status" value="1"/>
</dbReference>
<dbReference type="SUPFAM" id="SSF51984">
    <property type="entry name" value="MurCD N-terminal domain"/>
    <property type="match status" value="1"/>
</dbReference>
<dbReference type="SUPFAM" id="SSF53623">
    <property type="entry name" value="MurD-like peptide ligases, catalytic domain"/>
    <property type="match status" value="1"/>
</dbReference>
<dbReference type="SUPFAM" id="SSF53244">
    <property type="entry name" value="MurD-like peptide ligases, peptide-binding domain"/>
    <property type="match status" value="1"/>
</dbReference>
<gene>
    <name evidence="1" type="primary">murD</name>
    <name type="ordered locus">Psyc_2040</name>
</gene>
<organism>
    <name type="scientific">Psychrobacter arcticus (strain DSM 17307 / VKM B-2377 / 273-4)</name>
    <dbReference type="NCBI Taxonomy" id="259536"/>
    <lineage>
        <taxon>Bacteria</taxon>
        <taxon>Pseudomonadati</taxon>
        <taxon>Pseudomonadota</taxon>
        <taxon>Gammaproteobacteria</taxon>
        <taxon>Moraxellales</taxon>
        <taxon>Moraxellaceae</taxon>
        <taxon>Psychrobacter</taxon>
    </lineage>
</organism>
<reference key="1">
    <citation type="journal article" date="2010" name="Appl. Environ. Microbiol.">
        <title>The genome sequence of Psychrobacter arcticus 273-4, a psychroactive Siberian permafrost bacterium, reveals mechanisms for adaptation to low-temperature growth.</title>
        <authorList>
            <person name="Ayala-del-Rio H.L."/>
            <person name="Chain P.S."/>
            <person name="Grzymski J.J."/>
            <person name="Ponder M.A."/>
            <person name="Ivanova N."/>
            <person name="Bergholz P.W."/>
            <person name="Di Bartolo G."/>
            <person name="Hauser L."/>
            <person name="Land M."/>
            <person name="Bakermans C."/>
            <person name="Rodrigues D."/>
            <person name="Klappenbach J."/>
            <person name="Zarka D."/>
            <person name="Larimer F."/>
            <person name="Richardson P."/>
            <person name="Murray A."/>
            <person name="Thomashow M."/>
            <person name="Tiedje J.M."/>
        </authorList>
    </citation>
    <scope>NUCLEOTIDE SEQUENCE [LARGE SCALE GENOMIC DNA]</scope>
    <source>
        <strain>DSM 17307 / VKM B-2377 / 273-4</strain>
    </source>
</reference>
<evidence type="ECO:0000255" key="1">
    <source>
        <dbReference type="HAMAP-Rule" id="MF_00639"/>
    </source>
</evidence>
<comment type="function">
    <text evidence="1">Cell wall formation. Catalyzes the addition of glutamate to the nucleotide precursor UDP-N-acetylmuramoyl-L-alanine (UMA).</text>
</comment>
<comment type="catalytic activity">
    <reaction evidence="1">
        <text>UDP-N-acetyl-alpha-D-muramoyl-L-alanine + D-glutamate + ATP = UDP-N-acetyl-alpha-D-muramoyl-L-alanyl-D-glutamate + ADP + phosphate + H(+)</text>
        <dbReference type="Rhea" id="RHEA:16429"/>
        <dbReference type="ChEBI" id="CHEBI:15378"/>
        <dbReference type="ChEBI" id="CHEBI:29986"/>
        <dbReference type="ChEBI" id="CHEBI:30616"/>
        <dbReference type="ChEBI" id="CHEBI:43474"/>
        <dbReference type="ChEBI" id="CHEBI:83898"/>
        <dbReference type="ChEBI" id="CHEBI:83900"/>
        <dbReference type="ChEBI" id="CHEBI:456216"/>
        <dbReference type="EC" id="6.3.2.9"/>
    </reaction>
</comment>
<comment type="pathway">
    <text evidence="1">Cell wall biogenesis; peptidoglycan biosynthesis.</text>
</comment>
<comment type="subcellular location">
    <subcellularLocation>
        <location evidence="1">Cytoplasm</location>
    </subcellularLocation>
</comment>
<comment type="similarity">
    <text evidence="1">Belongs to the MurCDEF family.</text>
</comment>
<protein>
    <recommendedName>
        <fullName evidence="1">UDP-N-acetylmuramoylalanine--D-glutamate ligase</fullName>
        <ecNumber evidence="1">6.3.2.9</ecNumber>
    </recommendedName>
    <alternativeName>
        <fullName evidence="1">D-glutamic acid-adding enzyme</fullName>
    </alternativeName>
    <alternativeName>
        <fullName evidence="1">UDP-N-acetylmuramoyl-L-alanyl-D-glutamate synthetase</fullName>
    </alternativeName>
</protein>
<keyword id="KW-0067">ATP-binding</keyword>
<keyword id="KW-0131">Cell cycle</keyword>
<keyword id="KW-0132">Cell division</keyword>
<keyword id="KW-0133">Cell shape</keyword>
<keyword id="KW-0961">Cell wall biogenesis/degradation</keyword>
<keyword id="KW-0963">Cytoplasm</keyword>
<keyword id="KW-0436">Ligase</keyword>
<keyword id="KW-0547">Nucleotide-binding</keyword>
<keyword id="KW-0573">Peptidoglycan synthesis</keyword>
<keyword id="KW-1185">Reference proteome</keyword>